<comment type="function">
    <text evidence="2 3 6 7">Part of the ABC transporter complex SmoEFGH involved in sulfoquinovosyl glycerol (SQGro) uptake (Probable). Binds sulfoquinovosyl glycerol (SQGro) (PubMed:35074914). Can also bind sulfoquinovose (SQ), methyl alpha-sulfoquinovoside (SQMe) and a short-chain derivative of sulfoquinovosyl diacylglycerol (SQDG) (PubMed:35341160). Cannot bind D-glucose and D-glucuronic acid (PubMed:35074914).</text>
</comment>
<comment type="subunit">
    <text evidence="6 7">The complex is probably composed of two ATP-binding proteins (SmoE), two transmembrane proteins (SmoG and SmoH) and a solute-binding protein (SmoF).</text>
</comment>
<comment type="subcellular location">
    <subcellularLocation>
        <location evidence="5">Periplasm</location>
    </subcellularLocation>
</comment>
<comment type="induction">
    <text evidence="2">Induced during growth on sulfoquinovose.</text>
</comment>
<comment type="domain">
    <text evidence="2 3">Binding of ligand results in a large conformational change in the protein, and complete enclosure of the ligand.</text>
</comment>
<comment type="similarity">
    <text evidence="5">Belongs to the bacterial solute-binding protein 1 family.</text>
</comment>
<protein>
    <recommendedName>
        <fullName evidence="5">Sulfoquinovosyl glycerol-binding protein SmoF</fullName>
        <shortName evidence="5">SQGro-binding protein SmoF</shortName>
    </recommendedName>
    <alternativeName>
        <fullName evidence="4">SQ monooxygenase cluster protein F</fullName>
    </alternativeName>
</protein>
<name>SMOF_AGRFC</name>
<proteinExistence type="evidence at protein level"/>
<reference key="1">
    <citation type="journal article" date="2001" name="Science">
        <title>The genome of the natural genetic engineer Agrobacterium tumefaciens C58.</title>
        <authorList>
            <person name="Wood D.W."/>
            <person name="Setubal J.C."/>
            <person name="Kaul R."/>
            <person name="Monks D.E."/>
            <person name="Kitajima J.P."/>
            <person name="Okura V.K."/>
            <person name="Zhou Y."/>
            <person name="Chen L."/>
            <person name="Wood G.E."/>
            <person name="Almeida N.F. Jr."/>
            <person name="Woo L."/>
            <person name="Chen Y."/>
            <person name="Paulsen I.T."/>
            <person name="Eisen J.A."/>
            <person name="Karp P.D."/>
            <person name="Bovee D. Sr."/>
            <person name="Chapman P."/>
            <person name="Clendenning J."/>
            <person name="Deatherage G."/>
            <person name="Gillet W."/>
            <person name="Grant C."/>
            <person name="Kutyavin T."/>
            <person name="Levy R."/>
            <person name="Li M.-J."/>
            <person name="McClelland E."/>
            <person name="Palmieri A."/>
            <person name="Raymond C."/>
            <person name="Rouse G."/>
            <person name="Saenphimmachak C."/>
            <person name="Wu Z."/>
            <person name="Romero P."/>
            <person name="Gordon D."/>
            <person name="Zhang S."/>
            <person name="Yoo H."/>
            <person name="Tao Y."/>
            <person name="Biddle P."/>
            <person name="Jung M."/>
            <person name="Krespan W."/>
            <person name="Perry M."/>
            <person name="Gordon-Kamm B."/>
            <person name="Liao L."/>
            <person name="Kim S."/>
            <person name="Hendrick C."/>
            <person name="Zhao Z.-Y."/>
            <person name="Dolan M."/>
            <person name="Chumley F."/>
            <person name="Tingey S.V."/>
            <person name="Tomb J.-F."/>
            <person name="Gordon M.P."/>
            <person name="Olson M.V."/>
            <person name="Nester E.W."/>
        </authorList>
    </citation>
    <scope>NUCLEOTIDE SEQUENCE [LARGE SCALE GENOMIC DNA]</scope>
    <source>
        <strain>C58 / ATCC 33970</strain>
    </source>
</reference>
<reference key="2">
    <citation type="journal article" date="2001" name="Science">
        <title>Genome sequence of the plant pathogen and biotechnology agent Agrobacterium tumefaciens C58.</title>
        <authorList>
            <person name="Goodner B."/>
            <person name="Hinkle G."/>
            <person name="Gattung S."/>
            <person name="Miller N."/>
            <person name="Blanchard M."/>
            <person name="Qurollo B."/>
            <person name="Goldman B.S."/>
            <person name="Cao Y."/>
            <person name="Askenazi M."/>
            <person name="Halling C."/>
            <person name="Mullin L."/>
            <person name="Houmiel K."/>
            <person name="Gordon J."/>
            <person name="Vaudin M."/>
            <person name="Iartchouk O."/>
            <person name="Epp A."/>
            <person name="Liu F."/>
            <person name="Wollam C."/>
            <person name="Allinger M."/>
            <person name="Doughty D."/>
            <person name="Scott C."/>
            <person name="Lappas C."/>
            <person name="Markelz B."/>
            <person name="Flanagan C."/>
            <person name="Crowell C."/>
            <person name="Gurson J."/>
            <person name="Lomo C."/>
            <person name="Sear C."/>
            <person name="Strub G."/>
            <person name="Cielo C."/>
            <person name="Slater S."/>
        </authorList>
    </citation>
    <scope>NUCLEOTIDE SEQUENCE [LARGE SCALE GENOMIC DNA]</scope>
    <source>
        <strain>C58 / ATCC 33970</strain>
    </source>
</reference>
<reference evidence="11 12 13" key="3">
    <citation type="journal article" date="2022" name="Curr. Res. Struct. Biol.">
        <title>The sulfoquinovosyl glycerol binding protein SmoF binds and accommodates plant sulfolipids.</title>
        <authorList>
            <person name="Snow A.J.D."/>
            <person name="Sharma M."/>
            <person name="Lingford J.P."/>
            <person name="Zhang Y."/>
            <person name="Mui J.W."/>
            <person name="Epa R."/>
            <person name="Goddard-Borger E.D."/>
            <person name="Williams S.J."/>
            <person name="Davies G.J."/>
        </authorList>
    </citation>
    <scope>X-RAY CRYSTALLOGRAPHY (1.59 ANGSTROMS) OF 30-416 OF APOPROTEIN AND IN COMPLEXES WITH SULFOQUINOVOSE AND METHYL ALPHA-SULFOQUINOVOSIDE</scope>
    <scope>FUNCTION</scope>
    <scope>SUBUNIT</scope>
    <scope>DOMAIN</scope>
    <source>
        <strain>C58 / ATCC 33970</strain>
    </source>
</reference>
<reference evidence="9 10" key="4">
    <citation type="journal article" date="2022" name="Proc. Natl. Acad. Sci. U.S.A.">
        <title>Oxidative desulfurization pathway for complete catabolism of sulfoquinovose by bacteria.</title>
        <authorList>
            <person name="Sharma M."/>
            <person name="Lingford J.P."/>
            <person name="Petricevic M."/>
            <person name="Snow A.J.D."/>
            <person name="Zhang Y."/>
            <person name="Jaervaa M.A."/>
            <person name="Mui J.W."/>
            <person name="Scott N.E."/>
            <person name="Saunders E.C."/>
            <person name="Mao R."/>
            <person name="Epa R."/>
            <person name="da Silva B.M."/>
            <person name="Pires D.E.V."/>
            <person name="Ascher D.B."/>
            <person name="McConville M.J."/>
            <person name="Davies G.J."/>
            <person name="Williams S.J."/>
            <person name="Goddard-Borger E.D."/>
        </authorList>
    </citation>
    <scope>X-RAY CRYSTALLOGRAPHY (1.35 ANGSTROMS) OF 30-416 OF APOPROTEIN AND IN COMPLEX WITH SULFOQUINOVOSYL GLYCEROL</scope>
    <scope>FUNCTION</scope>
    <scope>SUBUNIT</scope>
    <scope>INDUCTION</scope>
    <scope>DOMAIN</scope>
    <source>
        <strain>C58 / ATCC 33970</strain>
    </source>
</reference>
<feature type="signal peptide" evidence="1">
    <location>
        <begin position="1"/>
        <end position="29"/>
    </location>
</feature>
<feature type="chain" id="PRO_5002735685" description="Sulfoquinovosyl glycerol-binding protein SmoF">
    <location>
        <begin position="30"/>
        <end position="416"/>
    </location>
</feature>
<feature type="binding site" evidence="2 10">
    <location>
        <position position="40"/>
    </location>
    <ligand>
        <name>3-(6-sulfo-alpha-D-quinovosyl)glycerol</name>
        <dbReference type="ChEBI" id="CHEBI:190012"/>
    </ligand>
</feature>
<feature type="binding site" evidence="3 12">
    <location>
        <position position="41"/>
    </location>
    <ligand>
        <name>6-sulfo-D-quinovose</name>
        <dbReference type="ChEBI" id="CHEBI:77132"/>
    </ligand>
</feature>
<feature type="binding site" evidence="2 10">
    <location>
        <position position="71"/>
    </location>
    <ligand>
        <name>3-(6-sulfo-alpha-D-quinovosyl)glycerol</name>
        <dbReference type="ChEBI" id="CHEBI:190012"/>
    </ligand>
</feature>
<feature type="binding site" evidence="2 10">
    <location>
        <position position="95"/>
    </location>
    <ligand>
        <name>3-(6-sulfo-alpha-D-quinovosyl)glycerol</name>
        <dbReference type="ChEBI" id="CHEBI:190012"/>
    </ligand>
</feature>
<feature type="binding site" evidence="2 10">
    <location>
        <position position="141"/>
    </location>
    <ligand>
        <name>3-(6-sulfo-alpha-D-quinovosyl)glycerol</name>
        <dbReference type="ChEBI" id="CHEBI:190012"/>
    </ligand>
</feature>
<feature type="binding site" evidence="2 10">
    <location>
        <position position="194"/>
    </location>
    <ligand>
        <name>3-(6-sulfo-alpha-D-quinovosyl)glycerol</name>
        <dbReference type="ChEBI" id="CHEBI:190012"/>
    </ligand>
</feature>
<feature type="binding site" evidence="2 10">
    <location>
        <position position="248"/>
    </location>
    <ligand>
        <name>3-(6-sulfo-alpha-D-quinovosyl)glycerol</name>
        <dbReference type="ChEBI" id="CHEBI:190012"/>
    </ligand>
</feature>
<feature type="binding site" evidence="2 10">
    <location>
        <position position="303"/>
    </location>
    <ligand>
        <name>3-(6-sulfo-alpha-D-quinovosyl)glycerol</name>
        <dbReference type="ChEBI" id="CHEBI:190012"/>
    </ligand>
</feature>
<feature type="binding site" evidence="3 12">
    <location>
        <position position="303"/>
    </location>
    <ligand>
        <name>6-sulfo-D-quinovose</name>
        <dbReference type="ChEBI" id="CHEBI:77132"/>
    </ligand>
</feature>
<feature type="binding site" evidence="2 10">
    <location>
        <position position="304"/>
    </location>
    <ligand>
        <name>3-(6-sulfo-alpha-D-quinovosyl)glycerol</name>
        <dbReference type="ChEBI" id="CHEBI:190012"/>
    </ligand>
</feature>
<feature type="binding site" evidence="3 12">
    <location>
        <position position="304"/>
    </location>
    <ligand>
        <name>6-sulfo-D-quinovose</name>
        <dbReference type="ChEBI" id="CHEBI:77132"/>
    </ligand>
</feature>
<feature type="binding site" evidence="2 10">
    <location>
        <position position="373"/>
    </location>
    <ligand>
        <name>3-(6-sulfo-alpha-D-quinovosyl)glycerol</name>
        <dbReference type="ChEBI" id="CHEBI:190012"/>
    </ligand>
</feature>
<feature type="binding site" evidence="3 12">
    <location>
        <position position="373"/>
    </location>
    <ligand>
        <name>6-sulfo-D-quinovose</name>
        <dbReference type="ChEBI" id="CHEBI:77132"/>
    </ligand>
</feature>
<feature type="strand" evidence="14">
    <location>
        <begin position="31"/>
        <end position="36"/>
    </location>
</feature>
<feature type="helix" evidence="16">
    <location>
        <begin position="39"/>
        <end position="41"/>
    </location>
</feature>
<feature type="helix" evidence="14">
    <location>
        <begin position="43"/>
        <end position="56"/>
    </location>
</feature>
<feature type="strand" evidence="14">
    <location>
        <begin position="60"/>
        <end position="65"/>
    </location>
</feature>
<feature type="helix" evidence="14">
    <location>
        <begin position="71"/>
        <end position="83"/>
    </location>
</feature>
<feature type="strand" evidence="14">
    <location>
        <begin position="91"/>
        <end position="95"/>
    </location>
</feature>
<feature type="helix" evidence="14">
    <location>
        <begin position="99"/>
        <end position="104"/>
    </location>
</feature>
<feature type="helix" evidence="14">
    <location>
        <begin position="123"/>
        <end position="127"/>
    </location>
</feature>
<feature type="strand" evidence="14">
    <location>
        <begin position="136"/>
        <end position="140"/>
    </location>
</feature>
<feature type="strand" evidence="14">
    <location>
        <begin position="144"/>
        <end position="148"/>
    </location>
</feature>
<feature type="turn" evidence="14">
    <location>
        <begin position="149"/>
        <end position="151"/>
    </location>
</feature>
<feature type="helix" evidence="14">
    <location>
        <begin position="163"/>
        <end position="176"/>
    </location>
</feature>
<feature type="strand" evidence="14">
    <location>
        <begin position="183"/>
        <end position="186"/>
    </location>
</feature>
<feature type="strand" evidence="14">
    <location>
        <begin position="190"/>
        <end position="192"/>
    </location>
</feature>
<feature type="helix" evidence="14">
    <location>
        <begin position="193"/>
        <end position="205"/>
    </location>
</feature>
<feature type="strand" evidence="15">
    <location>
        <begin position="210"/>
        <end position="212"/>
    </location>
</feature>
<feature type="helix" evidence="14">
    <location>
        <begin position="220"/>
        <end position="235"/>
    </location>
</feature>
<feature type="helix" evidence="14">
    <location>
        <begin position="243"/>
        <end position="245"/>
    </location>
</feature>
<feature type="helix" evidence="14">
    <location>
        <begin position="248"/>
        <end position="256"/>
    </location>
</feature>
<feature type="strand" evidence="14">
    <location>
        <begin position="260"/>
        <end position="265"/>
    </location>
</feature>
<feature type="helix" evidence="14">
    <location>
        <begin position="269"/>
        <end position="274"/>
    </location>
</feature>
<feature type="strand" evidence="14">
    <location>
        <begin position="284"/>
        <end position="287"/>
    </location>
</feature>
<feature type="strand" evidence="14">
    <location>
        <begin position="303"/>
        <end position="309"/>
    </location>
</feature>
<feature type="helix" evidence="14">
    <location>
        <begin position="315"/>
        <end position="325"/>
    </location>
</feature>
<feature type="helix" evidence="14">
    <location>
        <begin position="328"/>
        <end position="338"/>
    </location>
</feature>
<feature type="helix" evidence="14">
    <location>
        <begin position="345"/>
        <end position="348"/>
    </location>
</feature>
<feature type="helix" evidence="14">
    <location>
        <begin position="351"/>
        <end position="356"/>
    </location>
</feature>
<feature type="helix" evidence="14">
    <location>
        <begin position="360"/>
        <end position="367"/>
    </location>
</feature>
<feature type="helix" evidence="14">
    <location>
        <begin position="379"/>
        <end position="394"/>
    </location>
</feature>
<feature type="helix" evidence="14">
    <location>
        <begin position="400"/>
        <end position="414"/>
    </location>
</feature>
<evidence type="ECO:0000255" key="1"/>
<evidence type="ECO:0000269" key="2">
    <source>
    </source>
</evidence>
<evidence type="ECO:0000269" key="3">
    <source>
    </source>
</evidence>
<evidence type="ECO:0000303" key="4">
    <source>
    </source>
</evidence>
<evidence type="ECO:0000305" key="5"/>
<evidence type="ECO:0000305" key="6">
    <source>
    </source>
</evidence>
<evidence type="ECO:0000305" key="7">
    <source>
    </source>
</evidence>
<evidence type="ECO:0000312" key="8">
    <source>
        <dbReference type="EMBL" id="AAK90108.1"/>
    </source>
</evidence>
<evidence type="ECO:0007744" key="9">
    <source>
        <dbReference type="PDB" id="7NBZ"/>
    </source>
</evidence>
<evidence type="ECO:0007744" key="10">
    <source>
        <dbReference type="PDB" id="7OFY"/>
    </source>
</evidence>
<evidence type="ECO:0007744" key="11">
    <source>
        <dbReference type="PDB" id="7QHV"/>
    </source>
</evidence>
<evidence type="ECO:0007744" key="12">
    <source>
        <dbReference type="PDB" id="7YZS"/>
    </source>
</evidence>
<evidence type="ECO:0007744" key="13">
    <source>
        <dbReference type="PDB" id="7YZU"/>
    </source>
</evidence>
<evidence type="ECO:0007829" key="14">
    <source>
        <dbReference type="PDB" id="7NBZ"/>
    </source>
</evidence>
<evidence type="ECO:0007829" key="15">
    <source>
        <dbReference type="PDB" id="7OFY"/>
    </source>
</evidence>
<evidence type="ECO:0007829" key="16">
    <source>
        <dbReference type="PDB" id="7YZU"/>
    </source>
</evidence>
<dbReference type="EMBL" id="AE007870">
    <property type="protein sequence ID" value="AAK90108.1"/>
    <property type="molecule type" value="Genomic_DNA"/>
</dbReference>
<dbReference type="PIR" id="AD2960">
    <property type="entry name" value="AD2960"/>
</dbReference>
<dbReference type="PIR" id="B98323">
    <property type="entry name" value="B98323"/>
</dbReference>
<dbReference type="RefSeq" id="NP_357323.1">
    <property type="nucleotide sequence ID" value="NC_003063.2"/>
</dbReference>
<dbReference type="RefSeq" id="WP_010972909.1">
    <property type="nucleotide sequence ID" value="NC_003063.2"/>
</dbReference>
<dbReference type="PDB" id="7NBZ">
    <property type="method" value="X-ray"/>
    <property type="resolution" value="1.35 A"/>
    <property type="chains" value="A/B/C=30-416"/>
</dbReference>
<dbReference type="PDB" id="7OFY">
    <property type="method" value="X-ray"/>
    <property type="resolution" value="1.70 A"/>
    <property type="chains" value="A/B=30-416"/>
</dbReference>
<dbReference type="PDB" id="7QHV">
    <property type="method" value="X-ray"/>
    <property type="resolution" value="2.14 A"/>
    <property type="chains" value="AAA/BBB=30-416"/>
</dbReference>
<dbReference type="PDB" id="7YZS">
    <property type="method" value="X-ray"/>
    <property type="resolution" value="1.80 A"/>
    <property type="chains" value="AAA=30-416"/>
</dbReference>
<dbReference type="PDB" id="7YZU">
    <property type="method" value="X-ray"/>
    <property type="resolution" value="1.59 A"/>
    <property type="chains" value="A=30-416"/>
</dbReference>
<dbReference type="PDB" id="8S5B">
    <property type="method" value="X-ray"/>
    <property type="resolution" value="1.80 A"/>
    <property type="chains" value="A=30-416"/>
</dbReference>
<dbReference type="PDBsum" id="7NBZ"/>
<dbReference type="PDBsum" id="7OFY"/>
<dbReference type="PDBsum" id="7QHV"/>
<dbReference type="PDBsum" id="7YZS"/>
<dbReference type="PDBsum" id="7YZU"/>
<dbReference type="PDBsum" id="8S5B"/>
<dbReference type="SMR" id="A9CEY9"/>
<dbReference type="STRING" id="176299.Atu3282"/>
<dbReference type="EnsemblBacteria" id="AAK90108">
    <property type="protein sequence ID" value="AAK90108"/>
    <property type="gene ID" value="Atu3282"/>
</dbReference>
<dbReference type="GeneID" id="1135156"/>
<dbReference type="KEGG" id="atu:Atu3282"/>
<dbReference type="PATRIC" id="fig|176299.10.peg.3123"/>
<dbReference type="eggNOG" id="COG1653">
    <property type="taxonomic scope" value="Bacteria"/>
</dbReference>
<dbReference type="HOGENOM" id="CLU_031285_9_1_5"/>
<dbReference type="OrthoDB" id="9808332at2"/>
<dbReference type="PhylomeDB" id="A9CEY9"/>
<dbReference type="BioCyc" id="AGRO:ATU3282-MONOMER"/>
<dbReference type="BioCyc" id="MetaCyc:MONOMER-21952"/>
<dbReference type="Proteomes" id="UP000000813">
    <property type="component" value="Chromosome linear"/>
</dbReference>
<dbReference type="GO" id="GO:0042597">
    <property type="term" value="C:periplasmic space"/>
    <property type="evidence" value="ECO:0007669"/>
    <property type="project" value="UniProtKB-SubCell"/>
</dbReference>
<dbReference type="CDD" id="cd14750">
    <property type="entry name" value="PBP2_TMBP"/>
    <property type="match status" value="1"/>
</dbReference>
<dbReference type="Gene3D" id="3.40.190.10">
    <property type="entry name" value="Periplasmic binding protein-like II"/>
    <property type="match status" value="2"/>
</dbReference>
<dbReference type="InterPro" id="IPR050490">
    <property type="entry name" value="Bact_solute-bd_prot1"/>
</dbReference>
<dbReference type="InterPro" id="IPR006059">
    <property type="entry name" value="SBP"/>
</dbReference>
<dbReference type="PANTHER" id="PTHR43649:SF34">
    <property type="entry name" value="ABC TRANSPORTER PERIPLASMIC-BINDING PROTEIN YCJN-RELATED"/>
    <property type="match status" value="1"/>
</dbReference>
<dbReference type="PANTHER" id="PTHR43649">
    <property type="entry name" value="ARABINOSE-BINDING PROTEIN-RELATED"/>
    <property type="match status" value="1"/>
</dbReference>
<dbReference type="Pfam" id="PF01547">
    <property type="entry name" value="SBP_bac_1"/>
    <property type="match status" value="1"/>
</dbReference>
<dbReference type="SUPFAM" id="SSF53850">
    <property type="entry name" value="Periplasmic binding protein-like II"/>
    <property type="match status" value="1"/>
</dbReference>
<gene>
    <name evidence="4" type="primary">smoF</name>
    <name evidence="8" type="ordered locus">Atu3282</name>
</gene>
<organism>
    <name type="scientific">Agrobacterium fabrum (strain C58 / ATCC 33970)</name>
    <name type="common">Agrobacterium tumefaciens (strain C58)</name>
    <dbReference type="NCBI Taxonomy" id="176299"/>
    <lineage>
        <taxon>Bacteria</taxon>
        <taxon>Pseudomonadati</taxon>
        <taxon>Pseudomonadota</taxon>
        <taxon>Alphaproteobacteria</taxon>
        <taxon>Hyphomicrobiales</taxon>
        <taxon>Rhizobiaceae</taxon>
        <taxon>Rhizobium/Agrobacterium group</taxon>
        <taxon>Agrobacterium</taxon>
        <taxon>Agrobacterium tumefaciens complex</taxon>
    </lineage>
</organism>
<keyword id="KW-0002">3D-structure</keyword>
<keyword id="KW-0574">Periplasm</keyword>
<keyword id="KW-1185">Reference proteome</keyword>
<keyword id="KW-0732">Signal</keyword>
<keyword id="KW-0762">Sugar transport</keyword>
<keyword id="KW-0813">Transport</keyword>
<sequence>MTLKTIRGKALMGAALCATMLTFSGQAFADAELKIFVSSQHQPDIWRKALDQYEAKTPGVKVVIETGGNTSEMQAQYLNTVMSAKDSSLDVLMLDVIRPAQFATAGWTSDFSGKDLSAYLPTYAEANTVNGKIVALPAFADSMFLYYRKDLLDKYGIKPPTTWDELKEASKKVMEGEKNPELQGLSFQGKAIEGAVCTFLLPYWSEGKSLVENGKLNFDNKAAVDSLKLWKSFVDDGISKKNISEVATDDTRKEFQAGKVLFAVNWSYAWTHFQGKESQVNDKVGVARLPAVKGGEQTTCLGGWEFGVSAYSKQQDEAKKLVEYLSSQDVSKFMAINAALLPTYAALYKDADVTKTIPWFADALPVVETAKARPVTPRYNEVSETIRTTVNGVLAGVMTPEDGAKQMESRLRRVLR</sequence>
<accession>A9CEY9</accession>